<sequence length="313" mass="34890">MSSLRTHDDTWDIKSSVGTTAVMVAAARAVETEQPDPLIRDPYAKLLVTNSGAGVLWEAMLDPDIAARVEALDEESAAHLHHMRGYQAVRTHFFDTYFADAVAAGIRQIVILASGLDSRAYRLDWPAGTTVYEIDQPQVLAYKSTTLAENGVTPSADRREVAVDLRQDWPAALRAAGFDPTQRTAWLAEGLLMYLPAEAQDRLFTLIGELSPAGSRVAAETAPNHADERRQQMRERFKKVADEIGFEQTVDVGELMYRDDHRADVTEWLNAHGWRATAEHSTAAMRRLGRWIENVPLADDKDAFSDFVVAERR</sequence>
<name>Y3564_MYCPA</name>
<dbReference type="EC" id="2.1.1.-"/>
<dbReference type="EMBL" id="AE016958">
    <property type="protein sequence ID" value="AAS06114.1"/>
    <property type="molecule type" value="Genomic_DNA"/>
</dbReference>
<dbReference type="SMR" id="Q73U04"/>
<dbReference type="STRING" id="262316.MAP_3564"/>
<dbReference type="KEGG" id="mpa:MAP_3564"/>
<dbReference type="eggNOG" id="COG3315">
    <property type="taxonomic scope" value="Bacteria"/>
</dbReference>
<dbReference type="HOGENOM" id="CLU_056160_2_1_11"/>
<dbReference type="Proteomes" id="UP000000580">
    <property type="component" value="Chromosome"/>
</dbReference>
<dbReference type="GO" id="GO:0008168">
    <property type="term" value="F:methyltransferase activity"/>
    <property type="evidence" value="ECO:0007669"/>
    <property type="project" value="UniProtKB-KW"/>
</dbReference>
<dbReference type="GO" id="GO:0032259">
    <property type="term" value="P:methylation"/>
    <property type="evidence" value="ECO:0007669"/>
    <property type="project" value="UniProtKB-KW"/>
</dbReference>
<dbReference type="FunFam" id="3.40.50.150:FF:000152">
    <property type="entry name" value="S-adenosyl-L-methionine-dependent methyltransferase"/>
    <property type="match status" value="1"/>
</dbReference>
<dbReference type="Gene3D" id="3.40.50.150">
    <property type="entry name" value="Vaccinia Virus protein VP39"/>
    <property type="match status" value="1"/>
</dbReference>
<dbReference type="InterPro" id="IPR007213">
    <property type="entry name" value="Ppm1/Ppm2/Tcmp"/>
</dbReference>
<dbReference type="InterPro" id="IPR029063">
    <property type="entry name" value="SAM-dependent_MTases_sf"/>
</dbReference>
<dbReference type="InterPro" id="IPR011610">
    <property type="entry name" value="SAM_mthyl_Trfase_ML2640-like"/>
</dbReference>
<dbReference type="NCBIfam" id="TIGR00027">
    <property type="entry name" value="mthyl_TIGR00027"/>
    <property type="match status" value="1"/>
</dbReference>
<dbReference type="PANTHER" id="PTHR43619">
    <property type="entry name" value="S-ADENOSYL-L-METHIONINE-DEPENDENT METHYLTRANSFERASE YKTD-RELATED"/>
    <property type="match status" value="1"/>
</dbReference>
<dbReference type="PANTHER" id="PTHR43619:SF2">
    <property type="entry name" value="S-ADENOSYL-L-METHIONINE-DEPENDENT METHYLTRANSFERASES SUPERFAMILY PROTEIN"/>
    <property type="match status" value="1"/>
</dbReference>
<dbReference type="Pfam" id="PF04072">
    <property type="entry name" value="LCM"/>
    <property type="match status" value="1"/>
</dbReference>
<dbReference type="SUPFAM" id="SSF53335">
    <property type="entry name" value="S-adenosyl-L-methionine-dependent methyltransferases"/>
    <property type="match status" value="1"/>
</dbReference>
<protein>
    <recommendedName>
        <fullName>Putative S-adenosyl-L-methionine-dependent methyltransferase MAP_3564</fullName>
        <ecNumber>2.1.1.-</ecNumber>
    </recommendedName>
</protein>
<feature type="chain" id="PRO_0000361181" description="Putative S-adenosyl-L-methionine-dependent methyltransferase MAP_3564">
    <location>
        <begin position="1"/>
        <end position="313"/>
    </location>
</feature>
<feature type="binding site" evidence="1">
    <location>
        <position position="135"/>
    </location>
    <ligand>
        <name>S-adenosyl-L-methionine</name>
        <dbReference type="ChEBI" id="CHEBI:59789"/>
    </ligand>
</feature>
<feature type="binding site" evidence="1">
    <location>
        <begin position="164"/>
        <end position="165"/>
    </location>
    <ligand>
        <name>S-adenosyl-L-methionine</name>
        <dbReference type="ChEBI" id="CHEBI:59789"/>
    </ligand>
</feature>
<keyword id="KW-0489">Methyltransferase</keyword>
<keyword id="KW-1185">Reference proteome</keyword>
<keyword id="KW-0949">S-adenosyl-L-methionine</keyword>
<keyword id="KW-0808">Transferase</keyword>
<comment type="function">
    <text evidence="1">Exhibits S-adenosyl-L-methionine-dependent methyltransferase activity.</text>
</comment>
<comment type="similarity">
    <text evidence="2">Belongs to the UPF0677 family.</text>
</comment>
<accession>Q73U04</accession>
<gene>
    <name type="ordered locus">MAP_3564</name>
</gene>
<proteinExistence type="inferred from homology"/>
<reference key="1">
    <citation type="journal article" date="2005" name="Proc. Natl. Acad. Sci. U.S.A.">
        <title>The complete genome sequence of Mycobacterium avium subspecies paratuberculosis.</title>
        <authorList>
            <person name="Li L."/>
            <person name="Bannantine J.P."/>
            <person name="Zhang Q."/>
            <person name="Amonsin A."/>
            <person name="May B.J."/>
            <person name="Alt D."/>
            <person name="Banerji N."/>
            <person name="Kanjilal S."/>
            <person name="Kapur V."/>
        </authorList>
    </citation>
    <scope>NUCLEOTIDE SEQUENCE [LARGE SCALE GENOMIC DNA]</scope>
    <source>
        <strain>ATCC BAA-968 / K-10</strain>
    </source>
</reference>
<evidence type="ECO:0000250" key="1"/>
<evidence type="ECO:0000305" key="2"/>
<organism>
    <name type="scientific">Mycolicibacterium paratuberculosis (strain ATCC BAA-968 / K-10)</name>
    <name type="common">Mycobacterium paratuberculosis</name>
    <dbReference type="NCBI Taxonomy" id="262316"/>
    <lineage>
        <taxon>Bacteria</taxon>
        <taxon>Bacillati</taxon>
        <taxon>Actinomycetota</taxon>
        <taxon>Actinomycetes</taxon>
        <taxon>Mycobacteriales</taxon>
        <taxon>Mycobacteriaceae</taxon>
        <taxon>Mycobacterium</taxon>
        <taxon>Mycobacterium avium complex (MAC)</taxon>
    </lineage>
</organism>